<feature type="chain" id="PRO_1000121859" description="Glutamate-1-semialdehyde 2,1-aminomutase">
    <location>
        <begin position="1"/>
        <end position="427"/>
    </location>
</feature>
<feature type="modified residue" description="N6-(pyridoxal phosphate)lysine" evidence="1">
    <location>
        <position position="265"/>
    </location>
</feature>
<keyword id="KW-0963">Cytoplasm</keyword>
<keyword id="KW-0413">Isomerase</keyword>
<keyword id="KW-0627">Porphyrin biosynthesis</keyword>
<keyword id="KW-0663">Pyridoxal phosphate</keyword>
<dbReference type="EC" id="5.4.3.8" evidence="1"/>
<dbReference type="EMBL" id="CP000958">
    <property type="protein sequence ID" value="ACA90100.1"/>
    <property type="molecule type" value="Genomic_DNA"/>
</dbReference>
<dbReference type="RefSeq" id="WP_012328081.1">
    <property type="nucleotide sequence ID" value="NC_010508.1"/>
</dbReference>
<dbReference type="SMR" id="B1JX81"/>
<dbReference type="GeneID" id="83047713"/>
<dbReference type="KEGG" id="bcm:Bcenmc03_0923"/>
<dbReference type="HOGENOM" id="CLU_016922_1_5_4"/>
<dbReference type="UniPathway" id="UPA00251">
    <property type="reaction ID" value="UER00317"/>
</dbReference>
<dbReference type="Proteomes" id="UP000002169">
    <property type="component" value="Chromosome 1"/>
</dbReference>
<dbReference type="GO" id="GO:0005737">
    <property type="term" value="C:cytoplasm"/>
    <property type="evidence" value="ECO:0007669"/>
    <property type="project" value="UniProtKB-SubCell"/>
</dbReference>
<dbReference type="GO" id="GO:0042286">
    <property type="term" value="F:glutamate-1-semialdehyde 2,1-aminomutase activity"/>
    <property type="evidence" value="ECO:0007669"/>
    <property type="project" value="UniProtKB-UniRule"/>
</dbReference>
<dbReference type="GO" id="GO:0030170">
    <property type="term" value="F:pyridoxal phosphate binding"/>
    <property type="evidence" value="ECO:0007669"/>
    <property type="project" value="InterPro"/>
</dbReference>
<dbReference type="GO" id="GO:0008483">
    <property type="term" value="F:transaminase activity"/>
    <property type="evidence" value="ECO:0007669"/>
    <property type="project" value="InterPro"/>
</dbReference>
<dbReference type="GO" id="GO:0006782">
    <property type="term" value="P:protoporphyrinogen IX biosynthetic process"/>
    <property type="evidence" value="ECO:0007669"/>
    <property type="project" value="UniProtKB-UniRule"/>
</dbReference>
<dbReference type="CDD" id="cd00610">
    <property type="entry name" value="OAT_like"/>
    <property type="match status" value="1"/>
</dbReference>
<dbReference type="FunFam" id="3.40.640.10:FF:000021">
    <property type="entry name" value="Glutamate-1-semialdehyde 2,1-aminomutase"/>
    <property type="match status" value="1"/>
</dbReference>
<dbReference type="Gene3D" id="3.90.1150.10">
    <property type="entry name" value="Aspartate Aminotransferase, domain 1"/>
    <property type="match status" value="1"/>
</dbReference>
<dbReference type="Gene3D" id="3.40.640.10">
    <property type="entry name" value="Type I PLP-dependent aspartate aminotransferase-like (Major domain)"/>
    <property type="match status" value="1"/>
</dbReference>
<dbReference type="HAMAP" id="MF_00375">
    <property type="entry name" value="HemL_aminotrans_3"/>
    <property type="match status" value="1"/>
</dbReference>
<dbReference type="InterPro" id="IPR004639">
    <property type="entry name" value="4pyrrol_synth_GluAld_NH2Trfase"/>
</dbReference>
<dbReference type="InterPro" id="IPR005814">
    <property type="entry name" value="Aminotrans_3"/>
</dbReference>
<dbReference type="InterPro" id="IPR049704">
    <property type="entry name" value="Aminotrans_3_PPA_site"/>
</dbReference>
<dbReference type="InterPro" id="IPR015424">
    <property type="entry name" value="PyrdxlP-dep_Trfase"/>
</dbReference>
<dbReference type="InterPro" id="IPR015421">
    <property type="entry name" value="PyrdxlP-dep_Trfase_major"/>
</dbReference>
<dbReference type="InterPro" id="IPR015422">
    <property type="entry name" value="PyrdxlP-dep_Trfase_small"/>
</dbReference>
<dbReference type="NCBIfam" id="TIGR00713">
    <property type="entry name" value="hemL"/>
    <property type="match status" value="1"/>
</dbReference>
<dbReference type="NCBIfam" id="NF000818">
    <property type="entry name" value="PRK00062.1"/>
    <property type="match status" value="1"/>
</dbReference>
<dbReference type="PANTHER" id="PTHR43713">
    <property type="entry name" value="GLUTAMATE-1-SEMIALDEHYDE 2,1-AMINOMUTASE"/>
    <property type="match status" value="1"/>
</dbReference>
<dbReference type="PANTHER" id="PTHR43713:SF3">
    <property type="entry name" value="GLUTAMATE-1-SEMIALDEHYDE 2,1-AMINOMUTASE 1, CHLOROPLASTIC-RELATED"/>
    <property type="match status" value="1"/>
</dbReference>
<dbReference type="Pfam" id="PF00202">
    <property type="entry name" value="Aminotran_3"/>
    <property type="match status" value="1"/>
</dbReference>
<dbReference type="SUPFAM" id="SSF53383">
    <property type="entry name" value="PLP-dependent transferases"/>
    <property type="match status" value="1"/>
</dbReference>
<dbReference type="PROSITE" id="PS00600">
    <property type="entry name" value="AA_TRANSFER_CLASS_3"/>
    <property type="match status" value="1"/>
</dbReference>
<reference key="1">
    <citation type="submission" date="2008-02" db="EMBL/GenBank/DDBJ databases">
        <title>Complete sequence of chromosome 1 of Burkholderia cenocepacia MC0-3.</title>
        <authorList>
            <person name="Copeland A."/>
            <person name="Lucas S."/>
            <person name="Lapidus A."/>
            <person name="Barry K."/>
            <person name="Bruce D."/>
            <person name="Goodwin L."/>
            <person name="Glavina del Rio T."/>
            <person name="Dalin E."/>
            <person name="Tice H."/>
            <person name="Pitluck S."/>
            <person name="Chain P."/>
            <person name="Malfatti S."/>
            <person name="Shin M."/>
            <person name="Vergez L."/>
            <person name="Schmutz J."/>
            <person name="Larimer F."/>
            <person name="Land M."/>
            <person name="Hauser L."/>
            <person name="Kyrpides N."/>
            <person name="Mikhailova N."/>
            <person name="Tiedje J."/>
            <person name="Richardson P."/>
        </authorList>
    </citation>
    <scope>NUCLEOTIDE SEQUENCE [LARGE SCALE GENOMIC DNA]</scope>
    <source>
        <strain>MC0-3</strain>
    </source>
</reference>
<sequence>MSNNQILFERAQKTIPGGVNSPVRAFRSVGGTPRFVARAQGPYFWDADGKQYIDYIGSWGPMIVGHVHPEVLSAVQNVLADGFSFGAPTEAEIEIAEEICKLVPSIEQVRMVSSGTEATMSALRLARGFTGRSRIVKFEGCYHGHADSLLVKAGSGLLTFGNPTSAGVPADIAKHTTVLEYNNVAALEEAFGAFGDEIAAVIVEPVAGNMNLVRGTPEFLNALRALCMKHGAVLIFDEVMCGFRVALGGAQAYYGIAADLTCLGKVIGGGMPAAAFGGRRDIMAHLAPLGGVYQAGTLSGNPIAVAAGLKTLQLIQAPGFYDALTAQTKRLADGLAAEARAAGVPFAADSIGAMFGLYFAERVPGSFAEVTKSDVERFNRFFHLMLDEGVYFAPSAYEAGFVSSTHDDAVIDATLAAARRAFAALAA</sequence>
<proteinExistence type="inferred from homology"/>
<accession>B1JX81</accession>
<organism>
    <name type="scientific">Burkholderia orbicola (strain MC0-3)</name>
    <dbReference type="NCBI Taxonomy" id="406425"/>
    <lineage>
        <taxon>Bacteria</taxon>
        <taxon>Pseudomonadati</taxon>
        <taxon>Pseudomonadota</taxon>
        <taxon>Betaproteobacteria</taxon>
        <taxon>Burkholderiales</taxon>
        <taxon>Burkholderiaceae</taxon>
        <taxon>Burkholderia</taxon>
        <taxon>Burkholderia cepacia complex</taxon>
        <taxon>Burkholderia orbicola</taxon>
    </lineage>
</organism>
<protein>
    <recommendedName>
        <fullName evidence="1">Glutamate-1-semialdehyde 2,1-aminomutase</fullName>
        <shortName evidence="1">GSA</shortName>
        <ecNumber evidence="1">5.4.3.8</ecNumber>
    </recommendedName>
    <alternativeName>
        <fullName evidence="1">Glutamate-1-semialdehyde aminotransferase</fullName>
        <shortName evidence="1">GSA-AT</shortName>
    </alternativeName>
</protein>
<gene>
    <name evidence="1" type="primary">hemL</name>
    <name type="ordered locus">Bcenmc03_0923</name>
</gene>
<evidence type="ECO:0000255" key="1">
    <source>
        <dbReference type="HAMAP-Rule" id="MF_00375"/>
    </source>
</evidence>
<name>GSA_BURO0</name>
<comment type="catalytic activity">
    <reaction evidence="1">
        <text>(S)-4-amino-5-oxopentanoate = 5-aminolevulinate</text>
        <dbReference type="Rhea" id="RHEA:14265"/>
        <dbReference type="ChEBI" id="CHEBI:57501"/>
        <dbReference type="ChEBI" id="CHEBI:356416"/>
        <dbReference type="EC" id="5.4.3.8"/>
    </reaction>
</comment>
<comment type="cofactor">
    <cofactor evidence="1">
        <name>pyridoxal 5'-phosphate</name>
        <dbReference type="ChEBI" id="CHEBI:597326"/>
    </cofactor>
</comment>
<comment type="pathway">
    <text evidence="1">Porphyrin-containing compound metabolism; protoporphyrin-IX biosynthesis; 5-aminolevulinate from L-glutamyl-tRNA(Glu): step 2/2.</text>
</comment>
<comment type="subunit">
    <text evidence="1">Homodimer.</text>
</comment>
<comment type="subcellular location">
    <subcellularLocation>
        <location evidence="1">Cytoplasm</location>
    </subcellularLocation>
</comment>
<comment type="similarity">
    <text evidence="1">Belongs to the class-III pyridoxal-phosphate-dependent aminotransferase family. HemL subfamily.</text>
</comment>